<name>CRCK1_ARATH</name>
<evidence type="ECO:0000250" key="1">
    <source>
        <dbReference type="UniProtKB" id="O48814"/>
    </source>
</evidence>
<evidence type="ECO:0000255" key="2">
    <source>
        <dbReference type="PROSITE-ProRule" id="PRU00159"/>
    </source>
</evidence>
<evidence type="ECO:0000255" key="3">
    <source>
        <dbReference type="PROSITE-ProRule" id="PRU10027"/>
    </source>
</evidence>
<evidence type="ECO:0000256" key="4">
    <source>
        <dbReference type="SAM" id="MobiDB-lite"/>
    </source>
</evidence>
<evidence type="ECO:0000269" key="5">
    <source>
    </source>
</evidence>
<evidence type="ECO:0000305" key="6"/>
<gene>
    <name type="primary">CRCK1</name>
    <name type="ordered locus">At5g58940</name>
    <name type="ORF">K19M22.13</name>
</gene>
<comment type="catalytic activity">
    <reaction>
        <text>L-seryl-[protein] + ATP = O-phospho-L-seryl-[protein] + ADP + H(+)</text>
        <dbReference type="Rhea" id="RHEA:17989"/>
        <dbReference type="Rhea" id="RHEA-COMP:9863"/>
        <dbReference type="Rhea" id="RHEA-COMP:11604"/>
        <dbReference type="ChEBI" id="CHEBI:15378"/>
        <dbReference type="ChEBI" id="CHEBI:29999"/>
        <dbReference type="ChEBI" id="CHEBI:30616"/>
        <dbReference type="ChEBI" id="CHEBI:83421"/>
        <dbReference type="ChEBI" id="CHEBI:456216"/>
        <dbReference type="EC" id="2.7.11.1"/>
    </reaction>
</comment>
<comment type="catalytic activity">
    <reaction>
        <text>L-threonyl-[protein] + ATP = O-phospho-L-threonyl-[protein] + ADP + H(+)</text>
        <dbReference type="Rhea" id="RHEA:46608"/>
        <dbReference type="Rhea" id="RHEA-COMP:11060"/>
        <dbReference type="Rhea" id="RHEA-COMP:11605"/>
        <dbReference type="ChEBI" id="CHEBI:15378"/>
        <dbReference type="ChEBI" id="CHEBI:30013"/>
        <dbReference type="ChEBI" id="CHEBI:30616"/>
        <dbReference type="ChEBI" id="CHEBI:61977"/>
        <dbReference type="ChEBI" id="CHEBI:456216"/>
        <dbReference type="EC" id="2.7.11.1"/>
    </reaction>
</comment>
<comment type="cofactor">
    <cofactor evidence="5">
        <name>Mg(2+)</name>
        <dbReference type="ChEBI" id="CHEBI:18420"/>
    </cofactor>
</comment>
<comment type="activity regulation">
    <text evidence="5">Up-regulated by Ca(2+)/CaM.</text>
</comment>
<comment type="biophysicochemical properties">
    <kinetics>
        <KM evidence="5">1 uM for ATP with or without CaM</KM>
        <Vmax evidence="5">33.6 pmol/min/mg enzyme toward ATP without CaM</Vmax>
        <Vmax evidence="5">289.0 pmol/min/mg enzyme toward ATP with CaM</Vmax>
    </kinetics>
</comment>
<comment type="subunit">
    <text evidence="5">Interacts with calmodulin (CaM) in a Ca(2+)-dependent manner.</text>
</comment>
<comment type="subcellular location">
    <subcellularLocation>
        <location evidence="6">Cytoplasm</location>
    </subcellularLocation>
</comment>
<comment type="induction">
    <text evidence="5">By cold, salt, abscisic acid (ABA) and hydrogen peroxide.</text>
</comment>
<comment type="PTM">
    <text>Autophosphorylated.</text>
</comment>
<comment type="similarity">
    <text evidence="2">Belongs to the protein kinase superfamily. Ser/Thr protein kinase family.</text>
</comment>
<accession>Q9FIL7</accession>
<accession>Q5YCZ4</accession>
<reference key="1">
    <citation type="journal article" date="1998" name="DNA Res.">
        <title>Structural analysis of Arabidopsis thaliana chromosome 5. VIII. Sequence features of the regions of 1,081,958 bp covered by seventeen physically assigned P1 and TAC clones.</title>
        <authorList>
            <person name="Asamizu E."/>
            <person name="Sato S."/>
            <person name="Kaneko T."/>
            <person name="Nakamura Y."/>
            <person name="Kotani H."/>
            <person name="Miyajima N."/>
            <person name="Tabata S."/>
        </authorList>
    </citation>
    <scope>NUCLEOTIDE SEQUENCE [LARGE SCALE GENOMIC DNA]</scope>
    <source>
        <strain>cv. Columbia</strain>
    </source>
</reference>
<reference key="2">
    <citation type="journal article" date="2017" name="Plant J.">
        <title>Araport11: a complete reannotation of the Arabidopsis thaliana reference genome.</title>
        <authorList>
            <person name="Cheng C.Y."/>
            <person name="Krishnakumar V."/>
            <person name="Chan A.P."/>
            <person name="Thibaud-Nissen F."/>
            <person name="Schobel S."/>
            <person name="Town C.D."/>
        </authorList>
    </citation>
    <scope>GENOME REANNOTATION</scope>
    <source>
        <strain>cv. Columbia</strain>
    </source>
</reference>
<reference key="3">
    <citation type="submission" date="2004-10" db="EMBL/GenBank/DDBJ databases">
        <title>Arabidopsis ORF clones.</title>
        <authorList>
            <person name="Cheuk R.F."/>
            <person name="Chen H."/>
            <person name="Kim C.J."/>
            <person name="Shinn P."/>
            <person name="Ecker J.R."/>
        </authorList>
    </citation>
    <scope>NUCLEOTIDE SEQUENCE [LARGE SCALE MRNA]</scope>
    <source>
        <strain>cv. Columbia</strain>
    </source>
</reference>
<reference key="4">
    <citation type="journal article" date="2004" name="J. Biol. Chem.">
        <title>Calcium/calmodulin up-regulates a cytoplasmic receptor-like kinase in plants.</title>
        <authorList>
            <person name="Yang T."/>
            <person name="Chaudhuri S."/>
            <person name="Yang L."/>
            <person name="Chen Y."/>
            <person name="Poovaiah B.W."/>
        </authorList>
    </citation>
    <scope>NUCLEOTIDE SEQUENCE [MRNA] OF 3-470</scope>
    <scope>INTERACTION WITH CALMODULIN</scope>
    <scope>AUTOPHOSPHORYLATION</scope>
    <scope>ACTIVITY REGULATION</scope>
    <scope>BIOPHYSICOCHEMICAL PROPERTIES</scope>
    <scope>COFACTOR</scope>
    <scope>SUBCELLULAR LOCATION</scope>
    <scope>INDUCTION</scope>
    <source>
        <strain>cv. Columbia</strain>
    </source>
</reference>
<reference key="5">
    <citation type="journal article" date="2003" name="Plant Physiol.">
        <title>Expansion of the receptor-like kinase/Pelle gene family and receptor-like proteins in Arabidopsis.</title>
        <authorList>
            <person name="Shiu S.H."/>
            <person name="Bleecker A.B."/>
        </authorList>
    </citation>
    <scope>GENE FAMILY</scope>
</reference>
<organism>
    <name type="scientific">Arabidopsis thaliana</name>
    <name type="common">Mouse-ear cress</name>
    <dbReference type="NCBI Taxonomy" id="3702"/>
    <lineage>
        <taxon>Eukaryota</taxon>
        <taxon>Viridiplantae</taxon>
        <taxon>Streptophyta</taxon>
        <taxon>Embryophyta</taxon>
        <taxon>Tracheophyta</taxon>
        <taxon>Spermatophyta</taxon>
        <taxon>Magnoliopsida</taxon>
        <taxon>eudicotyledons</taxon>
        <taxon>Gunneridae</taxon>
        <taxon>Pentapetalae</taxon>
        <taxon>rosids</taxon>
        <taxon>malvids</taxon>
        <taxon>Brassicales</taxon>
        <taxon>Brassicaceae</taxon>
        <taxon>Camelineae</taxon>
        <taxon>Arabidopsis</taxon>
    </lineage>
</organism>
<protein>
    <recommendedName>
        <fullName>Calmodulin-binding receptor-like cytoplasmic kinase 1</fullName>
        <ecNumber>2.7.11.1</ecNumber>
    </recommendedName>
</protein>
<dbReference type="EC" id="2.7.11.1"/>
<dbReference type="EMBL" id="AB016885">
    <property type="protein sequence ID" value="BAB09637.1"/>
    <property type="molecule type" value="Genomic_DNA"/>
</dbReference>
<dbReference type="EMBL" id="CP002688">
    <property type="protein sequence ID" value="AED97119.1"/>
    <property type="molecule type" value="Genomic_DNA"/>
</dbReference>
<dbReference type="EMBL" id="CP002688">
    <property type="protein sequence ID" value="ANM70474.1"/>
    <property type="molecule type" value="Genomic_DNA"/>
</dbReference>
<dbReference type="EMBL" id="CP002688">
    <property type="protein sequence ID" value="ANM70475.1"/>
    <property type="molecule type" value="Genomic_DNA"/>
</dbReference>
<dbReference type="EMBL" id="CP002688">
    <property type="protein sequence ID" value="ANM70476.1"/>
    <property type="molecule type" value="Genomic_DNA"/>
</dbReference>
<dbReference type="EMBL" id="BT015092">
    <property type="protein sequence ID" value="AAT71964.1"/>
    <property type="molecule type" value="mRNA"/>
</dbReference>
<dbReference type="EMBL" id="BT015906">
    <property type="protein sequence ID" value="AAU95442.1"/>
    <property type="molecule type" value="mRNA"/>
</dbReference>
<dbReference type="EMBL" id="AY568379">
    <property type="protein sequence ID" value="AAT71312.1"/>
    <property type="molecule type" value="mRNA"/>
</dbReference>
<dbReference type="RefSeq" id="NP_001318835.1">
    <property type="nucleotide sequence ID" value="NM_001345330.1"/>
</dbReference>
<dbReference type="RefSeq" id="NP_001332082.1">
    <property type="nucleotide sequence ID" value="NM_001345331.1"/>
</dbReference>
<dbReference type="RefSeq" id="NP_001332083.1">
    <property type="nucleotide sequence ID" value="NM_001345332.1"/>
</dbReference>
<dbReference type="RefSeq" id="NP_200702.2">
    <property type="nucleotide sequence ID" value="NM_125284.4"/>
</dbReference>
<dbReference type="SMR" id="Q9FIL7"/>
<dbReference type="BioGRID" id="21255">
    <property type="interactions" value="1"/>
</dbReference>
<dbReference type="FunCoup" id="Q9FIL7">
    <property type="interactions" value="626"/>
</dbReference>
<dbReference type="STRING" id="3702.Q9FIL7"/>
<dbReference type="PaxDb" id="3702-AT5G58940.1"/>
<dbReference type="EnsemblPlants" id="AT5G58940.1">
    <property type="protein sequence ID" value="AT5G58940.1"/>
    <property type="gene ID" value="AT5G58940"/>
</dbReference>
<dbReference type="EnsemblPlants" id="AT5G58940.2">
    <property type="protein sequence ID" value="AT5G58940.2"/>
    <property type="gene ID" value="AT5G58940"/>
</dbReference>
<dbReference type="EnsemblPlants" id="AT5G58940.3">
    <property type="protein sequence ID" value="AT5G58940.3"/>
    <property type="gene ID" value="AT5G58940"/>
</dbReference>
<dbReference type="EnsemblPlants" id="AT5G58940.4">
    <property type="protein sequence ID" value="AT5G58940.4"/>
    <property type="gene ID" value="AT5G58940"/>
</dbReference>
<dbReference type="GeneID" id="836011"/>
<dbReference type="Gramene" id="AT5G58940.1">
    <property type="protein sequence ID" value="AT5G58940.1"/>
    <property type="gene ID" value="AT5G58940"/>
</dbReference>
<dbReference type="Gramene" id="AT5G58940.2">
    <property type="protein sequence ID" value="AT5G58940.2"/>
    <property type="gene ID" value="AT5G58940"/>
</dbReference>
<dbReference type="Gramene" id="AT5G58940.3">
    <property type="protein sequence ID" value="AT5G58940.3"/>
    <property type="gene ID" value="AT5G58940"/>
</dbReference>
<dbReference type="Gramene" id="AT5G58940.4">
    <property type="protein sequence ID" value="AT5G58940.4"/>
    <property type="gene ID" value="AT5G58940"/>
</dbReference>
<dbReference type="KEGG" id="ath:AT5G58940"/>
<dbReference type="Araport" id="AT5G58940"/>
<dbReference type="TAIR" id="AT5G58940">
    <property type="gene designation" value="CRCK1"/>
</dbReference>
<dbReference type="eggNOG" id="KOG1187">
    <property type="taxonomic scope" value="Eukaryota"/>
</dbReference>
<dbReference type="HOGENOM" id="CLU_000288_21_4_1"/>
<dbReference type="InParanoid" id="Q9FIL7"/>
<dbReference type="OMA" id="WEIRRDY"/>
<dbReference type="PhylomeDB" id="Q9FIL7"/>
<dbReference type="SABIO-RK" id="Q9FIL7"/>
<dbReference type="PRO" id="PR:Q9FIL7"/>
<dbReference type="Proteomes" id="UP000006548">
    <property type="component" value="Chromosome 5"/>
</dbReference>
<dbReference type="ExpressionAtlas" id="Q9FIL7">
    <property type="expression patterns" value="baseline and differential"/>
</dbReference>
<dbReference type="GO" id="GO:0005737">
    <property type="term" value="C:cytoplasm"/>
    <property type="evidence" value="ECO:0007669"/>
    <property type="project" value="UniProtKB-SubCell"/>
</dbReference>
<dbReference type="GO" id="GO:0005524">
    <property type="term" value="F:ATP binding"/>
    <property type="evidence" value="ECO:0007669"/>
    <property type="project" value="UniProtKB-KW"/>
</dbReference>
<dbReference type="GO" id="GO:0004683">
    <property type="term" value="F:calcium/calmodulin-dependent protein kinase activity"/>
    <property type="evidence" value="ECO:0000314"/>
    <property type="project" value="UniProtKB"/>
</dbReference>
<dbReference type="GO" id="GO:0005516">
    <property type="term" value="F:calmodulin binding"/>
    <property type="evidence" value="ECO:0000314"/>
    <property type="project" value="UniProtKB"/>
</dbReference>
<dbReference type="GO" id="GO:0106310">
    <property type="term" value="F:protein serine kinase activity"/>
    <property type="evidence" value="ECO:0007669"/>
    <property type="project" value="RHEA"/>
</dbReference>
<dbReference type="GO" id="GO:0004674">
    <property type="term" value="F:protein serine/threonine kinase activity"/>
    <property type="evidence" value="ECO:0000314"/>
    <property type="project" value="UniProtKB"/>
</dbReference>
<dbReference type="GO" id="GO:0009737">
    <property type="term" value="P:response to abscisic acid"/>
    <property type="evidence" value="ECO:0000270"/>
    <property type="project" value="UniProtKB"/>
</dbReference>
<dbReference type="GO" id="GO:0009409">
    <property type="term" value="P:response to cold"/>
    <property type="evidence" value="ECO:0000270"/>
    <property type="project" value="UniProtKB"/>
</dbReference>
<dbReference type="GO" id="GO:0042542">
    <property type="term" value="P:response to hydrogen peroxide"/>
    <property type="evidence" value="ECO:0000270"/>
    <property type="project" value="UniProtKB"/>
</dbReference>
<dbReference type="GO" id="GO:0009651">
    <property type="term" value="P:response to salt stress"/>
    <property type="evidence" value="ECO:0000270"/>
    <property type="project" value="UniProtKB"/>
</dbReference>
<dbReference type="CDD" id="cd14066">
    <property type="entry name" value="STKc_IRAK"/>
    <property type="match status" value="1"/>
</dbReference>
<dbReference type="FunFam" id="3.30.200.20:FF:000544">
    <property type="entry name" value="Calmodulin-binding receptor-like cytoplasmic kinase 1"/>
    <property type="match status" value="1"/>
</dbReference>
<dbReference type="FunFam" id="1.10.510.10:FF:000300">
    <property type="entry name" value="Calmodulin-binding receptor-like cytoplasmic kinase 3"/>
    <property type="match status" value="1"/>
</dbReference>
<dbReference type="Gene3D" id="3.30.200.20">
    <property type="entry name" value="Phosphorylase Kinase, domain 1"/>
    <property type="match status" value="1"/>
</dbReference>
<dbReference type="Gene3D" id="1.10.510.10">
    <property type="entry name" value="Transferase(Phosphotransferase) domain 1"/>
    <property type="match status" value="1"/>
</dbReference>
<dbReference type="InterPro" id="IPR011009">
    <property type="entry name" value="Kinase-like_dom_sf"/>
</dbReference>
<dbReference type="InterPro" id="IPR000719">
    <property type="entry name" value="Prot_kinase_dom"/>
</dbReference>
<dbReference type="InterPro" id="IPR017441">
    <property type="entry name" value="Protein_kinase_ATP_BS"/>
</dbReference>
<dbReference type="InterPro" id="IPR008271">
    <property type="entry name" value="Ser/Thr_kinase_AS"/>
</dbReference>
<dbReference type="PANTHER" id="PTHR46008">
    <property type="entry name" value="LEAF RUST 10 DISEASE-RESISTANCE LOCUS RECEPTOR-LIKE PROTEIN KINASE-LIKE 1.4"/>
    <property type="match status" value="1"/>
</dbReference>
<dbReference type="PANTHER" id="PTHR46008:SF48">
    <property type="entry name" value="PROTEIN KINASE DOMAIN-CONTAINING PROTEIN"/>
    <property type="match status" value="1"/>
</dbReference>
<dbReference type="Pfam" id="PF00069">
    <property type="entry name" value="Pkinase"/>
    <property type="match status" value="1"/>
</dbReference>
<dbReference type="SMART" id="SM00220">
    <property type="entry name" value="S_TKc"/>
    <property type="match status" value="1"/>
</dbReference>
<dbReference type="SUPFAM" id="SSF56112">
    <property type="entry name" value="Protein kinase-like (PK-like)"/>
    <property type="match status" value="1"/>
</dbReference>
<dbReference type="PROSITE" id="PS00107">
    <property type="entry name" value="PROTEIN_KINASE_ATP"/>
    <property type="match status" value="1"/>
</dbReference>
<dbReference type="PROSITE" id="PS50011">
    <property type="entry name" value="PROTEIN_KINASE_DOM"/>
    <property type="match status" value="1"/>
</dbReference>
<dbReference type="PROSITE" id="PS00108">
    <property type="entry name" value="PROTEIN_KINASE_ST"/>
    <property type="match status" value="1"/>
</dbReference>
<feature type="chain" id="PRO_0000420412" description="Calmodulin-binding receptor-like cytoplasmic kinase 1">
    <location>
        <begin position="1"/>
        <end position="470"/>
    </location>
</feature>
<feature type="domain" description="Protein kinase" evidence="2">
    <location>
        <begin position="147"/>
        <end position="423"/>
    </location>
</feature>
<feature type="region of interest" description="Disordered" evidence="4">
    <location>
        <begin position="1"/>
        <end position="29"/>
    </location>
</feature>
<feature type="region of interest" description="Disordered" evidence="4">
    <location>
        <begin position="65"/>
        <end position="128"/>
    </location>
</feature>
<feature type="region of interest" description="CaM-binding">
    <location>
        <begin position="162"/>
        <end position="185"/>
    </location>
</feature>
<feature type="compositionally biased region" description="Basic and acidic residues" evidence="4">
    <location>
        <begin position="65"/>
        <end position="82"/>
    </location>
</feature>
<feature type="compositionally biased region" description="Polar residues" evidence="4">
    <location>
        <begin position="83"/>
        <end position="98"/>
    </location>
</feature>
<feature type="compositionally biased region" description="Polar residues" evidence="4">
    <location>
        <begin position="108"/>
        <end position="121"/>
    </location>
</feature>
<feature type="active site" description="Proton acceptor" evidence="2 3">
    <location>
        <position position="273"/>
    </location>
</feature>
<feature type="binding site" evidence="2">
    <location>
        <begin position="153"/>
        <end position="161"/>
    </location>
    <ligand>
        <name>ATP</name>
        <dbReference type="ChEBI" id="CHEBI:30616"/>
    </ligand>
</feature>
<feature type="binding site" evidence="2">
    <location>
        <position position="175"/>
    </location>
    <ligand>
        <name>ATP</name>
        <dbReference type="ChEBI" id="CHEBI:30616"/>
    </ligand>
</feature>
<feature type="modified residue" description="Phosphoserine" evidence="1">
    <location>
        <position position="277"/>
    </location>
</feature>
<feature type="modified residue" description="Phosphoserine" evidence="1">
    <location>
        <position position="308"/>
    </location>
</feature>
<feature type="modified residue" description="Phosphothreonine" evidence="1">
    <location>
        <position position="309"/>
    </location>
</feature>
<feature type="modified residue" description="Phosphotyrosine" evidence="1">
    <location>
        <position position="322"/>
    </location>
</feature>
<proteinExistence type="evidence at protein level"/>
<sequence>MPMRSKTPTPLRFSNGKHQRDDSEYSWTDVGTGEKARNVSVLGAIRRAAKKVFVIIFLGQRKLKPTECRSDPGESSTHDRESTLSGWTGYSSPSSFGRSTERKVSGQYRFSGSRFQSPGKDSSSSKSWHQGPVIFSFGELQRATANFSSVHQIGEGGFGTVFKGKLDDGTIVAIKRARKNNYGKSWLLEFKNEIYTLSKIEHMNLVKLYGFLEHGDEKVIVVEYVANGNLREHLDGLRGNRLEMAERLEIAIDVAHALTYLHTYTDSPIIHRDIKASNILITNKLRAKVADFGFARLVSEDLGATHISTQVKGSAGYVDPDYLRTFQLTDKSDVYSFGVLLVEILTGRRPIELKRPRKDRLTVKWALRRLKDDEAVLIMDPFLKRNRAAIEVAEKMLRLASECVTPTRATRPAMKGIAEKLWAIRREMKETMICSSASNSSCSSTTHSFIGRDSDRYALPRIEDNENSIE</sequence>
<keyword id="KW-0067">ATP-binding</keyword>
<keyword id="KW-0963">Cytoplasm</keyword>
<keyword id="KW-0418">Kinase</keyword>
<keyword id="KW-0547">Nucleotide-binding</keyword>
<keyword id="KW-0597">Phosphoprotein</keyword>
<keyword id="KW-1185">Reference proteome</keyword>
<keyword id="KW-0723">Serine/threonine-protein kinase</keyword>
<keyword id="KW-0808">Transferase</keyword>